<sequence>MNKILFYLFVYGVVNSAAYDLLKAPNYFEEFVHRFNKDYGSEVEKLRRFKIFQHNLNEIIIKNQNDSAKYEINKFSDLSKDETIAKYTGLSLPIQTQNFCKVIVLDQPPGKGPLEFDWRRLNKVTSVKNQGMCGACWAFATLASLESQFAIKHNQLINLSEQQMIDCDFVDAGCNGGLLHTAFEAIIKMGGVQLESDYPYEADNNNCRMNTNKFLVQVKDCYRYITVYEEKLKDLLRLVGPIPMAIDAADIVNYKQGIIKYCFNSGLNHAVLLVGYGVENNIPYWTFKNTWGTDWGEEGFFRVQQNINACGMRNELASTAVIY</sequence>
<accession>Q8B9D5</accession>
<name>CATV_NPVR1</name>
<organismHost>
    <name type="scientific">Helicoverpa zea</name>
    <name type="common">Corn earworm moth</name>
    <name type="synonym">Heliothis zea</name>
    <dbReference type="NCBI Taxonomy" id="7113"/>
</organismHost>
<organismHost>
    <name type="scientific">Lepidoptera</name>
    <name type="common">butterflies and moths</name>
    <dbReference type="NCBI Taxonomy" id="7088"/>
</organismHost>
<organismHost>
    <name type="scientific">Ostrinia nubilalis</name>
    <name type="common">European corn borer</name>
    <name type="synonym">Pyralis nubilalis</name>
    <dbReference type="NCBI Taxonomy" id="29057"/>
</organismHost>
<keyword id="KW-1015">Disulfide bond</keyword>
<keyword id="KW-0325">Glycoprotein</keyword>
<keyword id="KW-0378">Hydrolase</keyword>
<keyword id="KW-0645">Protease</keyword>
<keyword id="KW-1185">Reference proteome</keyword>
<keyword id="KW-0732">Signal</keyword>
<keyword id="KW-0788">Thiol protease</keyword>
<keyword id="KW-0865">Zymogen</keyword>
<feature type="signal peptide" evidence="2">
    <location>
        <begin position="1"/>
        <end position="16"/>
    </location>
</feature>
<feature type="propeptide" id="PRO_0000322215" description="Activation peptide" evidence="2">
    <location>
        <begin position="17"/>
        <end position="112"/>
    </location>
</feature>
<feature type="chain" id="PRO_0000050585" description="Viral cathepsin">
    <location>
        <begin position="113"/>
        <end position="323"/>
    </location>
</feature>
<feature type="active site" evidence="1">
    <location>
        <position position="136"/>
    </location>
</feature>
<feature type="active site" evidence="1">
    <location>
        <position position="269"/>
    </location>
</feature>
<feature type="active site" evidence="1">
    <location>
        <position position="289"/>
    </location>
</feature>
<feature type="glycosylation site" description="N-linked (GlcNAc...) asparagine; by host" evidence="2">
    <location>
        <position position="158"/>
    </location>
</feature>
<feature type="disulfide bond" evidence="1">
    <location>
        <begin position="133"/>
        <end position="174"/>
    </location>
</feature>
<feature type="disulfide bond" evidence="1">
    <location>
        <begin position="167"/>
        <end position="207"/>
    </location>
</feature>
<feature type="disulfide bond" evidence="1">
    <location>
        <begin position="262"/>
        <end position="310"/>
    </location>
</feature>
<gene>
    <name type="primary">VCATH</name>
    <name type="synonym">RO120</name>
</gene>
<proteinExistence type="inferred from homology"/>
<protein>
    <recommendedName>
        <fullName>Viral cathepsin</fullName>
        <shortName>V-cath</shortName>
        <ecNumber>3.4.22.50</ecNumber>
    </recommendedName>
    <alternativeName>
        <fullName>Cysteine proteinase</fullName>
        <shortName>CP</shortName>
    </alternativeName>
</protein>
<comment type="function">
    <text evidence="1">Cysteine protease that plays an essential role in host liquefaction to facilitate horizontal transmission of the virus. May participate in the degradation of foreign protein expressed by the baculovirus system (By similarity).</text>
</comment>
<comment type="catalytic activity">
    <reaction>
        <text>Endopeptidase of broad specificity, hydrolyzing substrates of both cathepsin L and cathepsin B.</text>
        <dbReference type="EC" id="3.4.22.50"/>
    </reaction>
</comment>
<comment type="PTM">
    <text evidence="1">Synthesized as an inactive proenzyme and activated by proteolytic removal of the inhibitory propeptide.</text>
</comment>
<comment type="similarity">
    <text evidence="3 4 5">Belongs to the peptidase C1 family.</text>
</comment>
<reference key="1">
    <citation type="submission" date="2002-08" db="EMBL/GenBank/DDBJ databases">
        <title>The Rachiplusia ou multiple nucleopolyhedrovirus genome sequence.</title>
        <authorList>
            <person name="Bonning B.C."/>
            <person name="Harrison R.L."/>
        </authorList>
    </citation>
    <scope>NUCLEOTIDE SEQUENCE [GENOMIC DNA]</scope>
</reference>
<evidence type="ECO:0000250" key="1"/>
<evidence type="ECO:0000255" key="2"/>
<evidence type="ECO:0000255" key="3">
    <source>
        <dbReference type="PROSITE-ProRule" id="PRU10088"/>
    </source>
</evidence>
<evidence type="ECO:0000255" key="4">
    <source>
        <dbReference type="PROSITE-ProRule" id="PRU10089"/>
    </source>
</evidence>
<evidence type="ECO:0000255" key="5">
    <source>
        <dbReference type="PROSITE-ProRule" id="PRU10090"/>
    </source>
</evidence>
<dbReference type="EC" id="3.4.22.50"/>
<dbReference type="EMBL" id="AY145471">
    <property type="protein sequence ID" value="AAN28057.1"/>
    <property type="molecule type" value="Genomic_DNA"/>
</dbReference>
<dbReference type="SMR" id="Q8B9D5"/>
<dbReference type="MEROPS" id="C01.083"/>
<dbReference type="GlyCosmos" id="Q8B9D5">
    <property type="glycosylation" value="1 site, No reported glycans"/>
</dbReference>
<dbReference type="Proteomes" id="UP000007020">
    <property type="component" value="Segment"/>
</dbReference>
<dbReference type="GO" id="GO:0008234">
    <property type="term" value="F:cysteine-type peptidase activity"/>
    <property type="evidence" value="ECO:0007669"/>
    <property type="project" value="UniProtKB-KW"/>
</dbReference>
<dbReference type="GO" id="GO:0006508">
    <property type="term" value="P:proteolysis"/>
    <property type="evidence" value="ECO:0007669"/>
    <property type="project" value="UniProtKB-KW"/>
</dbReference>
<dbReference type="CDD" id="cd02248">
    <property type="entry name" value="Peptidase_C1A"/>
    <property type="match status" value="1"/>
</dbReference>
<dbReference type="Gene3D" id="3.90.70.10">
    <property type="entry name" value="Cysteine proteinases"/>
    <property type="match status" value="1"/>
</dbReference>
<dbReference type="InterPro" id="IPR038765">
    <property type="entry name" value="Papain-like_cys_pep_sf"/>
</dbReference>
<dbReference type="InterPro" id="IPR025661">
    <property type="entry name" value="Pept_asp_AS"/>
</dbReference>
<dbReference type="InterPro" id="IPR000169">
    <property type="entry name" value="Pept_cys_AS"/>
</dbReference>
<dbReference type="InterPro" id="IPR025660">
    <property type="entry name" value="Pept_his_AS"/>
</dbReference>
<dbReference type="InterPro" id="IPR013128">
    <property type="entry name" value="Peptidase_C1A"/>
</dbReference>
<dbReference type="InterPro" id="IPR000668">
    <property type="entry name" value="Peptidase_C1A_C"/>
</dbReference>
<dbReference type="InterPro" id="IPR039417">
    <property type="entry name" value="Peptidase_C1A_papain-like"/>
</dbReference>
<dbReference type="InterPro" id="IPR013201">
    <property type="entry name" value="Prot_inhib_I29"/>
</dbReference>
<dbReference type="PANTHER" id="PTHR12411">
    <property type="entry name" value="CYSTEINE PROTEASE FAMILY C1-RELATED"/>
    <property type="match status" value="1"/>
</dbReference>
<dbReference type="Pfam" id="PF08246">
    <property type="entry name" value="Inhibitor_I29"/>
    <property type="match status" value="1"/>
</dbReference>
<dbReference type="Pfam" id="PF00112">
    <property type="entry name" value="Peptidase_C1"/>
    <property type="match status" value="1"/>
</dbReference>
<dbReference type="PRINTS" id="PR00705">
    <property type="entry name" value="PAPAIN"/>
</dbReference>
<dbReference type="SMART" id="SM00848">
    <property type="entry name" value="Inhibitor_I29"/>
    <property type="match status" value="1"/>
</dbReference>
<dbReference type="SMART" id="SM00645">
    <property type="entry name" value="Pept_C1"/>
    <property type="match status" value="1"/>
</dbReference>
<dbReference type="SUPFAM" id="SSF54001">
    <property type="entry name" value="Cysteine proteinases"/>
    <property type="match status" value="1"/>
</dbReference>
<dbReference type="PROSITE" id="PS00640">
    <property type="entry name" value="THIOL_PROTEASE_ASN"/>
    <property type="match status" value="1"/>
</dbReference>
<dbReference type="PROSITE" id="PS00139">
    <property type="entry name" value="THIOL_PROTEASE_CYS"/>
    <property type="match status" value="1"/>
</dbReference>
<dbReference type="PROSITE" id="PS00639">
    <property type="entry name" value="THIOL_PROTEASE_HIS"/>
    <property type="match status" value="1"/>
</dbReference>
<organism>
    <name type="scientific">Rachiplusia ou multiple nucleopolyhedrovirus (strain R1)</name>
    <name type="common">RoMNPV</name>
    <dbReference type="NCBI Taxonomy" id="654904"/>
    <lineage>
        <taxon>Viruses</taxon>
        <taxon>Viruses incertae sedis</taxon>
        <taxon>Naldaviricetes</taxon>
        <taxon>Lefavirales</taxon>
        <taxon>Baculoviridae</taxon>
        <taxon>Alphabaculovirus</taxon>
        <taxon>Alphabaculovirus raous</taxon>
    </lineage>
</organism>